<evidence type="ECO:0000250" key="1"/>
<evidence type="ECO:0000250" key="2">
    <source>
        <dbReference type="UniProtKB" id="Q03336"/>
    </source>
</evidence>
<evidence type="ECO:0000269" key="3">
    <source>
    </source>
</evidence>
<evidence type="ECO:0000305" key="4"/>
<evidence type="ECO:0000312" key="5">
    <source>
        <dbReference type="EMBL" id="BAA90694.1"/>
    </source>
</evidence>
<evidence type="ECO:0000312" key="6">
    <source>
        <dbReference type="EMBL" id="BAA93719.1"/>
    </source>
</evidence>
<keyword id="KW-0060">Ascorbate biosynthesis</keyword>
<keyword id="KW-0106">Calcium</keyword>
<keyword id="KW-0963">Cytoplasm</keyword>
<keyword id="KW-0378">Hydrolase</keyword>
<keyword id="KW-0479">Metal-binding</keyword>
<keyword id="KW-1185">Reference proteome</keyword>
<accession>Q9I922</accession>
<accession>Q9IBA8</accession>
<proteinExistence type="evidence at transcript level"/>
<comment type="function">
    <text evidence="1">Gluconolactonase with low activity towards other sugar lactones, including gulonolactone and galactonolactone. Catalyzes a key step in ascorbic acid (vitamin C) biosynthesis. Can also hydrolyze diisopropyl phosphorofluoridate and phenylacetate (in vitro). Calcium-binding protein. Modulates Ca(2+) signaling, and Ca(2+)-dependent cellular processes and enzyme activities (By similarity).</text>
</comment>
<comment type="catalytic activity">
    <reaction>
        <text>D-glucono-1,5-lactone + H2O = D-gluconate + H(+)</text>
        <dbReference type="Rhea" id="RHEA:10440"/>
        <dbReference type="ChEBI" id="CHEBI:15377"/>
        <dbReference type="ChEBI" id="CHEBI:15378"/>
        <dbReference type="ChEBI" id="CHEBI:16217"/>
        <dbReference type="ChEBI" id="CHEBI:18391"/>
        <dbReference type="EC" id="3.1.1.17"/>
    </reaction>
</comment>
<comment type="cofactor">
    <cofactor evidence="1">
        <name>Zn(2+)</name>
        <dbReference type="ChEBI" id="CHEBI:29105"/>
    </cofactor>
    <cofactor evidence="1">
        <name>Mn(2+)</name>
        <dbReference type="ChEBI" id="CHEBI:29035"/>
    </cofactor>
    <cofactor evidence="1">
        <name>Ca(2+)</name>
        <dbReference type="ChEBI" id="CHEBI:29108"/>
    </cofactor>
    <cofactor evidence="1">
        <name>Mg(2+)</name>
        <dbReference type="ChEBI" id="CHEBI:18420"/>
    </cofactor>
    <text evidence="1">Binds 1 divalent metal cation per subunit. Most active with Zn(2+) and Mn(2+) ions. The physiological cofactor is most likely Ca(2+) or Mg(2+).</text>
</comment>
<comment type="pathway">
    <text>Cofactor biosynthesis; L-ascorbate biosynthesis via UDP-alpha-D-glucuronate pathway; L-ascorbate from UDP-alpha-D-glucuronate: step 3/4.</text>
</comment>
<comment type="subcellular location">
    <subcellularLocation>
        <location evidence="2">Cytoplasm</location>
    </subcellularLocation>
</comment>
<comment type="tissue specificity">
    <text evidence="3">Expressed in the liver, and in the pronephros from the late tadpole stage.</text>
</comment>
<comment type="induction">
    <text evidence="3">By activin and retinoic acid.</text>
</comment>
<comment type="similarity">
    <text evidence="2">Belongs to the SMP-30/CGR1 family.</text>
</comment>
<sequence length="299" mass="33087">MSSIKIECVVSETYKIGESPVWEEKEGTLLFVDITGQKVCRWDPSTKKVQSVSVEAPIGSVALRKSGGYVLAMGNTFSALNWEDQSVTTLARVDEDKPNNRFNDGKVDPEGRFLAGTMSQEIRPAVVERNQGSLFTLYPDHSVVKHFDMVDISNGLDWSLDHKTLYYIDSLSFKVDALDYDMKTGKSSNRRTLYKLQQDEGIPDGMCIDAEGKLWVACYNGGRVIRIDPETGKQIQTVKLPIDKTTSCCFGGPDYSEMYVTSACDGMDEDWKKRQPQSGGIYKITGLGVKGIAPTAFAG</sequence>
<reference evidence="4 5" key="1">
    <citation type="journal article" date="2000" name="Int. J. Mol. Med.">
        <title>The gene of Ca2+-binding protein regucalcin is highly conserved in vertebrate species.</title>
        <authorList>
            <person name="Misawa H."/>
            <person name="Yamaguchi M."/>
        </authorList>
    </citation>
    <scope>NUCLEOTIDE SEQUENCE [MRNA]</scope>
    <source>
        <tissue evidence="5">Liver</tissue>
    </source>
</reference>
<reference evidence="4 6" key="2">
    <citation type="journal article" date="2000" name="Mech. Dev.">
        <title>Cloning and expression pattern of a Xenopus pronephros-specific gene, XSMP-30.</title>
        <authorList>
            <person name="Sato A."/>
            <person name="Asashima M."/>
            <person name="Yokota T."/>
            <person name="Nishinakamura R."/>
        </authorList>
    </citation>
    <scope>NUCLEOTIDE SEQUENCE [MRNA]</scope>
    <scope>TISSUE SPECIFICITY</scope>
    <scope>INDUCTION</scope>
    <source>
        <tissue evidence="6">Animal cap</tissue>
    </source>
</reference>
<feature type="chain" id="PRO_0000287686" description="Regucalcin">
    <location>
        <begin position="1"/>
        <end position="299"/>
    </location>
</feature>
<feature type="active site" description="Proton donor/acceptor" evidence="1">
    <location>
        <position position="204"/>
    </location>
</feature>
<feature type="binding site" evidence="1">
    <location>
        <position position="18"/>
    </location>
    <ligand>
        <name>a divalent metal cation</name>
        <dbReference type="ChEBI" id="CHEBI:60240"/>
    </ligand>
</feature>
<feature type="binding site" evidence="1">
    <location>
        <position position="101"/>
    </location>
    <ligand>
        <name>substrate</name>
    </ligand>
</feature>
<feature type="binding site" evidence="1">
    <location>
        <position position="103"/>
    </location>
    <ligand>
        <name>substrate</name>
    </ligand>
</feature>
<feature type="binding site" evidence="1">
    <location>
        <position position="121"/>
    </location>
    <ligand>
        <name>substrate</name>
    </ligand>
</feature>
<feature type="binding site" evidence="1">
    <location>
        <position position="154"/>
    </location>
    <ligand>
        <name>a divalent metal cation</name>
        <dbReference type="ChEBI" id="CHEBI:60240"/>
    </ligand>
</feature>
<feature type="binding site" evidence="1">
    <location>
        <position position="204"/>
    </location>
    <ligand>
        <name>a divalent metal cation</name>
        <dbReference type="ChEBI" id="CHEBI:60240"/>
    </ligand>
</feature>
<feature type="sequence conflict" description="In Ref. 2; BAA93719." evidence="4" ref="2">
    <original>T</original>
    <variation>S</variation>
    <location>
        <position position="285"/>
    </location>
</feature>
<dbReference type="EC" id="3.1.1.17"/>
<dbReference type="EMBL" id="AB037936">
    <property type="protein sequence ID" value="BAA90694.1"/>
    <property type="molecule type" value="mRNA"/>
</dbReference>
<dbReference type="EMBL" id="AB033368">
    <property type="protein sequence ID" value="BAA93719.1"/>
    <property type="molecule type" value="mRNA"/>
</dbReference>
<dbReference type="RefSeq" id="XP_018100223.1">
    <property type="nucleotide sequence ID" value="XM_018244734.1"/>
</dbReference>
<dbReference type="SMR" id="Q9I922"/>
<dbReference type="KEGG" id="xla:373659"/>
<dbReference type="AGR" id="Xenbase:XB-GENE-865001"/>
<dbReference type="CTD" id="373659"/>
<dbReference type="Xenbase" id="XB-GENE-865001">
    <property type="gene designation" value="rgn.L"/>
</dbReference>
<dbReference type="OMA" id="WAGTMRY"/>
<dbReference type="OrthoDB" id="423498at2759"/>
<dbReference type="UniPathway" id="UPA00991">
    <property type="reaction ID" value="UER00938"/>
</dbReference>
<dbReference type="Proteomes" id="UP000186698">
    <property type="component" value="Chromosome 2L"/>
</dbReference>
<dbReference type="Bgee" id="373659">
    <property type="expression patterns" value="Expressed in liver and 12 other cell types or tissues"/>
</dbReference>
<dbReference type="GO" id="GO:0005737">
    <property type="term" value="C:cytoplasm"/>
    <property type="evidence" value="ECO:0000250"/>
    <property type="project" value="UniProtKB"/>
</dbReference>
<dbReference type="GO" id="GO:0005634">
    <property type="term" value="C:nucleus"/>
    <property type="evidence" value="ECO:0000250"/>
    <property type="project" value="UniProtKB"/>
</dbReference>
<dbReference type="GO" id="GO:0005509">
    <property type="term" value="F:calcium ion binding"/>
    <property type="evidence" value="ECO:0000250"/>
    <property type="project" value="UniProtKB"/>
</dbReference>
<dbReference type="GO" id="GO:0030234">
    <property type="term" value="F:enzyme regulator activity"/>
    <property type="evidence" value="ECO:0007669"/>
    <property type="project" value="InterPro"/>
</dbReference>
<dbReference type="GO" id="GO:0004341">
    <property type="term" value="F:gluconolactonase activity"/>
    <property type="evidence" value="ECO:0000250"/>
    <property type="project" value="UniProtKB"/>
</dbReference>
<dbReference type="GO" id="GO:0008270">
    <property type="term" value="F:zinc ion binding"/>
    <property type="evidence" value="ECO:0000250"/>
    <property type="project" value="UniProtKB"/>
</dbReference>
<dbReference type="GO" id="GO:0006874">
    <property type="term" value="P:intracellular calcium ion homeostasis"/>
    <property type="evidence" value="ECO:0000250"/>
    <property type="project" value="UniProtKB"/>
</dbReference>
<dbReference type="GO" id="GO:0019853">
    <property type="term" value="P:L-ascorbic acid biosynthetic process"/>
    <property type="evidence" value="ECO:0000250"/>
    <property type="project" value="UniProtKB"/>
</dbReference>
<dbReference type="GO" id="GO:0032781">
    <property type="term" value="P:positive regulation of ATP-dependent activity"/>
    <property type="evidence" value="ECO:0000250"/>
    <property type="project" value="UniProtKB"/>
</dbReference>
<dbReference type="GO" id="GO:0050848">
    <property type="term" value="P:regulation of calcium-mediated signaling"/>
    <property type="evidence" value="ECO:0000250"/>
    <property type="project" value="UniProtKB"/>
</dbReference>
<dbReference type="FunFam" id="2.120.10.30:FF:000027">
    <property type="entry name" value="Regucalcin homologue"/>
    <property type="match status" value="1"/>
</dbReference>
<dbReference type="Gene3D" id="2.120.10.30">
    <property type="entry name" value="TolB, C-terminal domain"/>
    <property type="match status" value="1"/>
</dbReference>
<dbReference type="InterPro" id="IPR011042">
    <property type="entry name" value="6-blade_b-propeller_TolB-like"/>
</dbReference>
<dbReference type="InterPro" id="IPR008367">
    <property type="entry name" value="Regucalcin"/>
</dbReference>
<dbReference type="InterPro" id="IPR013658">
    <property type="entry name" value="SGL"/>
</dbReference>
<dbReference type="InterPro" id="IPR005511">
    <property type="entry name" value="SMP-30"/>
</dbReference>
<dbReference type="PANTHER" id="PTHR10907">
    <property type="entry name" value="REGUCALCIN"/>
    <property type="match status" value="1"/>
</dbReference>
<dbReference type="PANTHER" id="PTHR10907:SF47">
    <property type="entry name" value="REGUCALCIN"/>
    <property type="match status" value="1"/>
</dbReference>
<dbReference type="Pfam" id="PF08450">
    <property type="entry name" value="SGL"/>
    <property type="match status" value="1"/>
</dbReference>
<dbReference type="PRINTS" id="PR01791">
    <property type="entry name" value="REGUCALCIN"/>
</dbReference>
<dbReference type="PRINTS" id="PR01790">
    <property type="entry name" value="SMP30FAMILY"/>
</dbReference>
<dbReference type="SUPFAM" id="SSF63829">
    <property type="entry name" value="Calcium-dependent phosphotriesterase"/>
    <property type="match status" value="1"/>
</dbReference>
<name>RGN_XENLA</name>
<protein>
    <recommendedName>
        <fullName>Regucalcin</fullName>
        <shortName>RC</shortName>
    </recommendedName>
    <alternativeName>
        <fullName>Gluconolactonase</fullName>
        <shortName>GNL</shortName>
        <ecNumber>3.1.1.17</ecNumber>
    </alternativeName>
    <alternativeName>
        <fullName>Senescence marker protein 30</fullName>
        <shortName>SMP-30</shortName>
        <shortName>xSMP-30</shortName>
    </alternativeName>
</protein>
<gene>
    <name evidence="2" type="primary">rgn</name>
</gene>
<organism>
    <name type="scientific">Xenopus laevis</name>
    <name type="common">African clawed frog</name>
    <dbReference type="NCBI Taxonomy" id="8355"/>
    <lineage>
        <taxon>Eukaryota</taxon>
        <taxon>Metazoa</taxon>
        <taxon>Chordata</taxon>
        <taxon>Craniata</taxon>
        <taxon>Vertebrata</taxon>
        <taxon>Euteleostomi</taxon>
        <taxon>Amphibia</taxon>
        <taxon>Batrachia</taxon>
        <taxon>Anura</taxon>
        <taxon>Pipoidea</taxon>
        <taxon>Pipidae</taxon>
        <taxon>Xenopodinae</taxon>
        <taxon>Xenopus</taxon>
        <taxon>Xenopus</taxon>
    </lineage>
</organism>